<dbReference type="EC" id="3.1.2.-" evidence="1"/>
<dbReference type="EC" id="3.5.1.-" evidence="1"/>
<dbReference type="EC" id="3.5.1.124" evidence="1"/>
<dbReference type="EMBL" id="CP000438">
    <property type="protein sequence ID" value="ABJ10303.1"/>
    <property type="molecule type" value="Genomic_DNA"/>
</dbReference>
<dbReference type="RefSeq" id="WP_003140559.1">
    <property type="nucleotide sequence ID" value="NZ_CP034244.1"/>
</dbReference>
<dbReference type="SMR" id="Q02IV5"/>
<dbReference type="MEROPS" id="C56.006"/>
<dbReference type="KEGG" id="pau:PA14_49710"/>
<dbReference type="PseudoCAP" id="PA14_49710"/>
<dbReference type="HOGENOM" id="CLU_066933_0_0_6"/>
<dbReference type="BioCyc" id="PAER208963:G1G74-4174-MONOMER"/>
<dbReference type="Proteomes" id="UP000000653">
    <property type="component" value="Chromosome"/>
</dbReference>
<dbReference type="GO" id="GO:0005737">
    <property type="term" value="C:cytoplasm"/>
    <property type="evidence" value="ECO:0007669"/>
    <property type="project" value="UniProtKB-SubCell"/>
</dbReference>
<dbReference type="GO" id="GO:0019172">
    <property type="term" value="F:glyoxalase III activity"/>
    <property type="evidence" value="ECO:0007669"/>
    <property type="project" value="TreeGrafter"/>
</dbReference>
<dbReference type="GO" id="GO:0036524">
    <property type="term" value="F:protein deglycase activity"/>
    <property type="evidence" value="ECO:0007669"/>
    <property type="project" value="UniProtKB-UniRule"/>
</dbReference>
<dbReference type="GO" id="GO:0016790">
    <property type="term" value="F:thiolester hydrolase activity"/>
    <property type="evidence" value="ECO:0007669"/>
    <property type="project" value="UniProtKB-UniRule"/>
</dbReference>
<dbReference type="GO" id="GO:0006281">
    <property type="term" value="P:DNA repair"/>
    <property type="evidence" value="ECO:0007669"/>
    <property type="project" value="UniProtKB-UniRule"/>
</dbReference>
<dbReference type="GO" id="GO:0019243">
    <property type="term" value="P:methylglyoxal catabolic process to D-lactate via S-lactoyl-glutathione"/>
    <property type="evidence" value="ECO:0007669"/>
    <property type="project" value="TreeGrafter"/>
</dbReference>
<dbReference type="GO" id="GO:0030091">
    <property type="term" value="P:protein repair"/>
    <property type="evidence" value="ECO:0007669"/>
    <property type="project" value="UniProtKB-UniRule"/>
</dbReference>
<dbReference type="Gene3D" id="3.40.50.880">
    <property type="match status" value="1"/>
</dbReference>
<dbReference type="HAMAP" id="MF_01046">
    <property type="entry name" value="Deglycase_HchA"/>
    <property type="match status" value="1"/>
</dbReference>
<dbReference type="InterPro" id="IPR029062">
    <property type="entry name" value="Class_I_gatase-like"/>
</dbReference>
<dbReference type="InterPro" id="IPR002818">
    <property type="entry name" value="DJ-1/PfpI"/>
</dbReference>
<dbReference type="InterPro" id="IPR017283">
    <property type="entry name" value="HchA"/>
</dbReference>
<dbReference type="InterPro" id="IPR050325">
    <property type="entry name" value="Prot/Nucl_acid_deglycase"/>
</dbReference>
<dbReference type="NCBIfam" id="NF003168">
    <property type="entry name" value="PRK04155.1"/>
    <property type="match status" value="1"/>
</dbReference>
<dbReference type="PANTHER" id="PTHR48094">
    <property type="entry name" value="PROTEIN/NUCLEIC ACID DEGLYCASE DJ-1-RELATED"/>
    <property type="match status" value="1"/>
</dbReference>
<dbReference type="PANTHER" id="PTHR48094:SF20">
    <property type="entry name" value="PROTEIN_NUCLEIC ACID DEGLYCASE 1"/>
    <property type="match status" value="1"/>
</dbReference>
<dbReference type="Pfam" id="PF01965">
    <property type="entry name" value="DJ-1_PfpI"/>
    <property type="match status" value="1"/>
</dbReference>
<dbReference type="PIRSF" id="PIRSF037798">
    <property type="entry name" value="Chaperone_HchA"/>
    <property type="match status" value="1"/>
</dbReference>
<dbReference type="SUPFAM" id="SSF52317">
    <property type="entry name" value="Class I glutamine amidotransferase-like"/>
    <property type="match status" value="1"/>
</dbReference>
<gene>
    <name evidence="1" type="primary">hchA</name>
    <name type="ordered locus">PA14_49710</name>
</gene>
<reference key="1">
    <citation type="journal article" date="2006" name="Genome Biol.">
        <title>Genomic analysis reveals that Pseudomonas aeruginosa virulence is combinatorial.</title>
        <authorList>
            <person name="Lee D.G."/>
            <person name="Urbach J.M."/>
            <person name="Wu G."/>
            <person name="Liberati N.T."/>
            <person name="Feinbaum R.L."/>
            <person name="Miyata S."/>
            <person name="Diggins L.T."/>
            <person name="He J."/>
            <person name="Saucier M."/>
            <person name="Deziel E."/>
            <person name="Friedman L."/>
            <person name="Li L."/>
            <person name="Grills G."/>
            <person name="Montgomery K."/>
            <person name="Kucherlapati R."/>
            <person name="Rahme L.G."/>
            <person name="Ausubel F.M."/>
        </authorList>
    </citation>
    <scope>NUCLEOTIDE SEQUENCE [LARGE SCALE GENOMIC DNA]</scope>
    <source>
        <strain>UCBPP-PA14</strain>
    </source>
</reference>
<name>HCHA_PSEAB</name>
<sequence>MSNERDTSRTPTPDHAEHNAFFPSPYSLSQYTSAKTDFDGADYPTPYNGGKKVLMIGTDERYILMQNGSMFSTGNHPVEMLLPMYHLDKAGFEFDVATLSGNPVKLEMWAMPGEDEAVKSIYAKYLPKLKAPQKLADLLEQAVADDSPYAAVFVPGGHGVLAGIPHSREVKRLLNAFLAKDRYIITLCHGPACLLAPAVEEKPEDYPFKGYEICVFPDALDTGANLEIGYMPGPLPWLVGENLQKLGVKILNKGITGQVHRDRKLLTGDSPLASNNLGKLAAKTLLEAFAR</sequence>
<proteinExistence type="inferred from homology"/>
<accession>Q02IV5</accession>
<comment type="function">
    <text evidence="1">Protein and nucleotide deglycase that catalyzes the deglycation of the Maillard adducts formed between amino groups of proteins or nucleotides and reactive carbonyl groups of glyoxals. Thus, functions as a protein deglycase that repairs methylglyoxal- and glyoxal-glycated proteins, and releases repaired proteins and lactate or glycolate, respectively. Deglycates cysteine, arginine and lysine residues in proteins, and thus reactivates these proteins by reversing glycation by glyoxals. Acts on early glycation intermediates (hemithioacetals and aminocarbinols), preventing the formation of Schiff bases and advanced glycation endproducts (AGE). Also functions as a nucleotide deglycase able to repair glycated guanine in the free nucleotide pool (GTP, GDP, GMP, dGTP) and in DNA and RNA. Is thus involved in a major nucleotide repair system named guanine glycation repair (GG repair), dedicated to reversing methylglyoxal and glyoxal damage via nucleotide sanitization and direct nucleic acid repair. Plays an important role in protecting cells from carbonyl stress.</text>
</comment>
<comment type="catalytic activity">
    <reaction evidence="1">
        <text>N(omega)-(1-hydroxy-2-oxopropyl)-L-arginyl-[protein] + H2O = lactate + L-arginyl-[protein] + H(+)</text>
        <dbReference type="Rhea" id="RHEA:49548"/>
        <dbReference type="Rhea" id="RHEA-COMP:10532"/>
        <dbReference type="Rhea" id="RHEA-COMP:12428"/>
        <dbReference type="ChEBI" id="CHEBI:15377"/>
        <dbReference type="ChEBI" id="CHEBI:15378"/>
        <dbReference type="ChEBI" id="CHEBI:24996"/>
        <dbReference type="ChEBI" id="CHEBI:29965"/>
        <dbReference type="ChEBI" id="CHEBI:131708"/>
        <dbReference type="EC" id="3.5.1.124"/>
    </reaction>
</comment>
<comment type="catalytic activity">
    <reaction evidence="1">
        <text>N(6)-(1-hydroxy-2-oxopropyl)-L-lysyl-[protein] + H2O = lactate + L-lysyl-[protein] + H(+)</text>
        <dbReference type="Rhea" id="RHEA:49552"/>
        <dbReference type="Rhea" id="RHEA-COMP:9752"/>
        <dbReference type="Rhea" id="RHEA-COMP:12429"/>
        <dbReference type="ChEBI" id="CHEBI:15377"/>
        <dbReference type="ChEBI" id="CHEBI:15378"/>
        <dbReference type="ChEBI" id="CHEBI:24996"/>
        <dbReference type="ChEBI" id="CHEBI:29969"/>
        <dbReference type="ChEBI" id="CHEBI:131709"/>
        <dbReference type="EC" id="3.5.1.124"/>
    </reaction>
</comment>
<comment type="catalytic activity">
    <reaction evidence="1">
        <text>S-(1-hydroxy-2-oxopropyl)-L-cysteinyl-[protein] + H2O = lactate + L-cysteinyl-[protein] + H(+)</text>
        <dbReference type="Rhea" id="RHEA:49556"/>
        <dbReference type="Rhea" id="RHEA-COMP:10131"/>
        <dbReference type="Rhea" id="RHEA-COMP:12430"/>
        <dbReference type="ChEBI" id="CHEBI:15377"/>
        <dbReference type="ChEBI" id="CHEBI:15378"/>
        <dbReference type="ChEBI" id="CHEBI:24996"/>
        <dbReference type="ChEBI" id="CHEBI:29950"/>
        <dbReference type="ChEBI" id="CHEBI:131710"/>
        <dbReference type="EC" id="3.5.1.124"/>
    </reaction>
</comment>
<comment type="catalytic activity">
    <reaction evidence="1">
        <text>N(omega)-(1-hydroxy-2-oxoethyl)-L-arginyl-[protein] + H2O = L-arginyl-[protein] + glycolate + H(+)</text>
        <dbReference type="Rhea" id="RHEA:57188"/>
        <dbReference type="Rhea" id="RHEA-COMP:10532"/>
        <dbReference type="Rhea" id="RHEA-COMP:14844"/>
        <dbReference type="ChEBI" id="CHEBI:15377"/>
        <dbReference type="ChEBI" id="CHEBI:15378"/>
        <dbReference type="ChEBI" id="CHEBI:29805"/>
        <dbReference type="ChEBI" id="CHEBI:29965"/>
        <dbReference type="ChEBI" id="CHEBI:141553"/>
        <dbReference type="EC" id="3.5.1.124"/>
    </reaction>
</comment>
<comment type="catalytic activity">
    <reaction evidence="1">
        <text>N(6)-(1-hydroxy-2-oxoethyl)-L-lysyl-[protein] + H2O = glycolate + L-lysyl-[protein] + H(+)</text>
        <dbReference type="Rhea" id="RHEA:57192"/>
        <dbReference type="Rhea" id="RHEA-COMP:9752"/>
        <dbReference type="Rhea" id="RHEA-COMP:14845"/>
        <dbReference type="ChEBI" id="CHEBI:15377"/>
        <dbReference type="ChEBI" id="CHEBI:15378"/>
        <dbReference type="ChEBI" id="CHEBI:29805"/>
        <dbReference type="ChEBI" id="CHEBI:29969"/>
        <dbReference type="ChEBI" id="CHEBI:141554"/>
        <dbReference type="EC" id="3.5.1.124"/>
    </reaction>
</comment>
<comment type="catalytic activity">
    <reaction evidence="1">
        <text>S-(1-hydroxy-2-oxoethyl)-L-cysteinyl-[protein] + H2O = glycolate + L-cysteinyl-[protein] + H(+)</text>
        <dbReference type="Rhea" id="RHEA:57196"/>
        <dbReference type="Rhea" id="RHEA-COMP:10131"/>
        <dbReference type="Rhea" id="RHEA-COMP:14846"/>
        <dbReference type="ChEBI" id="CHEBI:15377"/>
        <dbReference type="ChEBI" id="CHEBI:15378"/>
        <dbReference type="ChEBI" id="CHEBI:29805"/>
        <dbReference type="ChEBI" id="CHEBI:29950"/>
        <dbReference type="ChEBI" id="CHEBI:141555"/>
        <dbReference type="EC" id="3.5.1.124"/>
    </reaction>
</comment>
<comment type="catalytic activity">
    <reaction evidence="1">
        <text>N(2)-(1-hydroxy-2-oxopropyl)-dGTP + H2O = lactate + dGTP + H(+)</text>
        <dbReference type="Rhea" id="RHEA:57244"/>
        <dbReference type="ChEBI" id="CHEBI:15377"/>
        <dbReference type="ChEBI" id="CHEBI:15378"/>
        <dbReference type="ChEBI" id="CHEBI:24996"/>
        <dbReference type="ChEBI" id="CHEBI:61429"/>
        <dbReference type="ChEBI" id="CHEBI:141569"/>
    </reaction>
</comment>
<comment type="catalytic activity">
    <reaction evidence="1">
        <text>N(2)-(1-hydroxy-2-oxopropyl)-GTP + H2O = lactate + GTP + H(+)</text>
        <dbReference type="Rhea" id="RHEA:57256"/>
        <dbReference type="ChEBI" id="CHEBI:15377"/>
        <dbReference type="ChEBI" id="CHEBI:15378"/>
        <dbReference type="ChEBI" id="CHEBI:24996"/>
        <dbReference type="ChEBI" id="CHEBI:37565"/>
        <dbReference type="ChEBI" id="CHEBI:141570"/>
    </reaction>
</comment>
<comment type="catalytic activity">
    <reaction evidence="1">
        <text>N(2)-(1-hydroxy-2-oxopropyl)-GDP + H2O = lactate + GDP + H(+)</text>
        <dbReference type="Rhea" id="RHEA:57260"/>
        <dbReference type="ChEBI" id="CHEBI:15377"/>
        <dbReference type="ChEBI" id="CHEBI:15378"/>
        <dbReference type="ChEBI" id="CHEBI:24996"/>
        <dbReference type="ChEBI" id="CHEBI:58189"/>
        <dbReference type="ChEBI" id="CHEBI:141573"/>
    </reaction>
</comment>
<comment type="catalytic activity">
    <reaction evidence="1">
        <text>N(2)-(1-hydroxy-2-oxopropyl)-GMP + H2O = lactate + GMP + H(+)</text>
        <dbReference type="Rhea" id="RHEA:57268"/>
        <dbReference type="ChEBI" id="CHEBI:15377"/>
        <dbReference type="ChEBI" id="CHEBI:15378"/>
        <dbReference type="ChEBI" id="CHEBI:24996"/>
        <dbReference type="ChEBI" id="CHEBI:58115"/>
        <dbReference type="ChEBI" id="CHEBI:141575"/>
    </reaction>
</comment>
<comment type="catalytic activity">
    <reaction evidence="1">
        <text>N(2)-(1-hydroxy-2-oxoethyl)-dGTP + H2O = dGTP + glycolate + H(+)</text>
        <dbReference type="Rhea" id="RHEA:57248"/>
        <dbReference type="ChEBI" id="CHEBI:15377"/>
        <dbReference type="ChEBI" id="CHEBI:15378"/>
        <dbReference type="ChEBI" id="CHEBI:29805"/>
        <dbReference type="ChEBI" id="CHEBI:61429"/>
        <dbReference type="ChEBI" id="CHEBI:141572"/>
    </reaction>
</comment>
<comment type="catalytic activity">
    <reaction evidence="1">
        <text>N(2)-(1-hydroxy-2-oxoethyl)-GTP + H2O = glycolate + GTP + H(+)</text>
        <dbReference type="Rhea" id="RHEA:57252"/>
        <dbReference type="ChEBI" id="CHEBI:15377"/>
        <dbReference type="ChEBI" id="CHEBI:15378"/>
        <dbReference type="ChEBI" id="CHEBI:29805"/>
        <dbReference type="ChEBI" id="CHEBI:37565"/>
        <dbReference type="ChEBI" id="CHEBI:141571"/>
    </reaction>
</comment>
<comment type="catalytic activity">
    <reaction evidence="1">
        <text>N(2)-(1-hydroxy-2-oxoethyl)-GDP + H2O = glycolate + GDP + H(+)</text>
        <dbReference type="Rhea" id="RHEA:57264"/>
        <dbReference type="ChEBI" id="CHEBI:15377"/>
        <dbReference type="ChEBI" id="CHEBI:15378"/>
        <dbReference type="ChEBI" id="CHEBI:29805"/>
        <dbReference type="ChEBI" id="CHEBI:58189"/>
        <dbReference type="ChEBI" id="CHEBI:141574"/>
    </reaction>
</comment>
<comment type="catalytic activity">
    <reaction evidence="1">
        <text>N(2)-(1-hydroxy-2-oxoethyl)-GMP + H2O = glycolate + GMP + H(+)</text>
        <dbReference type="Rhea" id="RHEA:57304"/>
        <dbReference type="ChEBI" id="CHEBI:15377"/>
        <dbReference type="ChEBI" id="CHEBI:15378"/>
        <dbReference type="ChEBI" id="CHEBI:29805"/>
        <dbReference type="ChEBI" id="CHEBI:58115"/>
        <dbReference type="ChEBI" id="CHEBI:141576"/>
    </reaction>
</comment>
<comment type="catalytic activity">
    <reaction evidence="1">
        <text>an N(2)-(1-hydroxy-2-oxopropyl)-guanosine in RNA + H2O = a guanosine in RNA + lactate + H(+)</text>
        <dbReference type="Rhea" id="RHEA:57288"/>
        <dbReference type="Rhea" id="RHEA-COMP:14855"/>
        <dbReference type="Rhea" id="RHEA-COMP:14858"/>
        <dbReference type="ChEBI" id="CHEBI:15377"/>
        <dbReference type="ChEBI" id="CHEBI:15378"/>
        <dbReference type="ChEBI" id="CHEBI:24996"/>
        <dbReference type="ChEBI" id="CHEBI:74269"/>
        <dbReference type="ChEBI" id="CHEBI:141580"/>
    </reaction>
</comment>
<comment type="catalytic activity">
    <reaction evidence="1">
        <text>an N(2)-(1-hydroxy-2-oxopropyl)-2'-deoxyguanosine in DNA + H2O = a 2'-deoxyguanosine in DNA + lactate + H(+)</text>
        <dbReference type="Rhea" id="RHEA:57300"/>
        <dbReference type="Rhea" id="RHEA-COMP:11367"/>
        <dbReference type="Rhea" id="RHEA-COMP:14856"/>
        <dbReference type="ChEBI" id="CHEBI:15377"/>
        <dbReference type="ChEBI" id="CHEBI:15378"/>
        <dbReference type="ChEBI" id="CHEBI:24996"/>
        <dbReference type="ChEBI" id="CHEBI:85445"/>
        <dbReference type="ChEBI" id="CHEBI:141578"/>
    </reaction>
</comment>
<comment type="catalytic activity">
    <reaction evidence="1">
        <text>an N(2)-(1-hydroxy-2-oxoethyl)-guanosine in RNA + H2O = a guanosine in RNA + glycolate + H(+)</text>
        <dbReference type="Rhea" id="RHEA:57292"/>
        <dbReference type="Rhea" id="RHEA-COMP:14855"/>
        <dbReference type="Rhea" id="RHEA-COMP:14859"/>
        <dbReference type="ChEBI" id="CHEBI:15377"/>
        <dbReference type="ChEBI" id="CHEBI:15378"/>
        <dbReference type="ChEBI" id="CHEBI:29805"/>
        <dbReference type="ChEBI" id="CHEBI:74269"/>
        <dbReference type="ChEBI" id="CHEBI:141581"/>
    </reaction>
</comment>
<comment type="catalytic activity">
    <reaction evidence="1">
        <text>an N(2)-(1-hydroxy-2-oxoethyl)-2'-deoxyguanosine in DNA + H2O = a 2'-deoxyguanosine in DNA + glycolate + H(+)</text>
        <dbReference type="Rhea" id="RHEA:57296"/>
        <dbReference type="Rhea" id="RHEA-COMP:11367"/>
        <dbReference type="Rhea" id="RHEA-COMP:14857"/>
        <dbReference type="ChEBI" id="CHEBI:15377"/>
        <dbReference type="ChEBI" id="CHEBI:15378"/>
        <dbReference type="ChEBI" id="CHEBI:29805"/>
        <dbReference type="ChEBI" id="CHEBI:85445"/>
        <dbReference type="ChEBI" id="CHEBI:141579"/>
    </reaction>
</comment>
<comment type="subcellular location">
    <subcellularLocation>
        <location evidence="1">Cytoplasm</location>
    </subcellularLocation>
</comment>
<comment type="similarity">
    <text evidence="1">Belongs to the peptidase C56 family. HchA subfamily.</text>
</comment>
<feature type="chain" id="PRO_1000064279" description="Protein/nucleic acid deglycase HchA">
    <location>
        <begin position="1"/>
        <end position="291"/>
    </location>
</feature>
<feature type="region of interest" description="Disordered" evidence="2">
    <location>
        <begin position="1"/>
        <end position="24"/>
    </location>
</feature>
<feature type="compositionally biased region" description="Basic and acidic residues" evidence="2">
    <location>
        <begin position="1"/>
        <end position="18"/>
    </location>
</feature>
<feature type="active site" description="Nucleophile" evidence="1">
    <location>
        <position position="188"/>
    </location>
</feature>
<evidence type="ECO:0000255" key="1">
    <source>
        <dbReference type="HAMAP-Rule" id="MF_01046"/>
    </source>
</evidence>
<evidence type="ECO:0000256" key="2">
    <source>
        <dbReference type="SAM" id="MobiDB-lite"/>
    </source>
</evidence>
<protein>
    <recommendedName>
        <fullName evidence="1">Protein/nucleic acid deglycase HchA</fullName>
        <ecNumber evidence="1">3.1.2.-</ecNumber>
        <ecNumber evidence="1">3.5.1.-</ecNumber>
        <ecNumber evidence="1">3.5.1.124</ecNumber>
    </recommendedName>
    <alternativeName>
        <fullName evidence="1">Maillard deglycase</fullName>
    </alternativeName>
</protein>
<keyword id="KW-0963">Cytoplasm</keyword>
<keyword id="KW-0227">DNA damage</keyword>
<keyword id="KW-0234">DNA repair</keyword>
<keyword id="KW-0378">Hydrolase</keyword>
<keyword id="KW-0346">Stress response</keyword>
<organism>
    <name type="scientific">Pseudomonas aeruginosa (strain UCBPP-PA14)</name>
    <dbReference type="NCBI Taxonomy" id="208963"/>
    <lineage>
        <taxon>Bacteria</taxon>
        <taxon>Pseudomonadati</taxon>
        <taxon>Pseudomonadota</taxon>
        <taxon>Gammaproteobacteria</taxon>
        <taxon>Pseudomonadales</taxon>
        <taxon>Pseudomonadaceae</taxon>
        <taxon>Pseudomonas</taxon>
    </lineage>
</organism>